<name>AKH2_SCHGR</name>
<comment type="function">
    <text>This hormone, released from cells in the corpora cardiaca, causes release of diglycerides from the fat body and stimulation of muscles to use these diglycerides as an energy source during energy-demanding processes.</text>
</comment>
<comment type="subunit">
    <text>Adipokinetic hormone precursor-related peptide (APRP) can form three type of disulfide-bond dimers: p1 (alpha-alpha), p2 (alpha-beta), and p3 (beta-beta).</text>
</comment>
<comment type="subcellular location">
    <subcellularLocation>
        <location>Secreted</location>
    </subcellularLocation>
</comment>
<comment type="similarity">
    <text evidence="2">Belongs to the AKH/HRTH/RPCH family.</text>
</comment>
<proteinExistence type="evidence at protein level"/>
<keyword id="KW-0027">Amidation</keyword>
<keyword id="KW-0165">Cleavage on pair of basic residues</keyword>
<keyword id="KW-0903">Direct protein sequencing</keyword>
<keyword id="KW-1015">Disulfide bond</keyword>
<keyword id="KW-0286">Flight</keyword>
<keyword id="KW-0372">Hormone</keyword>
<keyword id="KW-0527">Neuropeptide</keyword>
<keyword id="KW-0873">Pyrrolidone carboxylic acid</keyword>
<keyword id="KW-0964">Secreted</keyword>
<dbReference type="GO" id="GO:0005576">
    <property type="term" value="C:extracellular region"/>
    <property type="evidence" value="ECO:0007669"/>
    <property type="project" value="UniProtKB-SubCell"/>
</dbReference>
<dbReference type="GO" id="GO:0005179">
    <property type="term" value="F:hormone activity"/>
    <property type="evidence" value="ECO:0007669"/>
    <property type="project" value="UniProtKB-KW"/>
</dbReference>
<dbReference type="GO" id="GO:0007629">
    <property type="term" value="P:flight behavior"/>
    <property type="evidence" value="ECO:0007669"/>
    <property type="project" value="UniProtKB-KW"/>
</dbReference>
<dbReference type="GO" id="GO:0007218">
    <property type="term" value="P:neuropeptide signaling pathway"/>
    <property type="evidence" value="ECO:0007669"/>
    <property type="project" value="UniProtKB-KW"/>
</dbReference>
<dbReference type="InterPro" id="IPR002047">
    <property type="entry name" value="Adipokinetic_hormone_CS"/>
</dbReference>
<dbReference type="PROSITE" id="PS00256">
    <property type="entry name" value="AKH"/>
    <property type="match status" value="1"/>
</dbReference>
<organism>
    <name type="scientific">Schistocerca gregaria</name>
    <name type="common">Desert locust</name>
    <name type="synonym">Gryllus gregarius</name>
    <dbReference type="NCBI Taxonomy" id="7010"/>
    <lineage>
        <taxon>Eukaryota</taxon>
        <taxon>Metazoa</taxon>
        <taxon>Ecdysozoa</taxon>
        <taxon>Arthropoda</taxon>
        <taxon>Hexapoda</taxon>
        <taxon>Insecta</taxon>
        <taxon>Pterygota</taxon>
        <taxon>Neoptera</taxon>
        <taxon>Polyneoptera</taxon>
        <taxon>Orthoptera</taxon>
        <taxon>Caelifera</taxon>
        <taxon>Acrididea</taxon>
        <taxon>Acridomorpha</taxon>
        <taxon>Acridoidea</taxon>
        <taxon>Acrididae</taxon>
        <taxon>Cyrtacanthacridinae</taxon>
        <taxon>Schistocerca</taxon>
    </lineage>
</organism>
<evidence type="ECO:0000269" key="1">
    <source>
    </source>
</evidence>
<evidence type="ECO:0000305" key="2"/>
<accession>P35808</accession>
<accession>P08378</accession>
<protein>
    <recommendedName>
        <fullName>Adipokinetic prohormone type 2</fullName>
    </recommendedName>
    <component>
        <recommendedName>
            <fullName>Adipokinetic hormone 2</fullName>
        </recommendedName>
        <alternativeName>
            <fullName>Adipokinetic hormone II</fullName>
            <shortName>AKH-II</shortName>
        </alternativeName>
    </component>
    <component>
        <recommendedName>
            <fullName>Adipokinetic hormone precursor-related peptide beta chain</fullName>
            <shortName>APRP-beta</shortName>
        </recommendedName>
    </component>
</protein>
<reference key="1">
    <citation type="journal article" date="1991" name="J. Neurosci.">
        <title>Regulation of neuropeptide stoichiometry in neurosecretory cells.</title>
        <authorList>
            <person name="Hekimi S."/>
            <person name="Fischer-Lougheed J."/>
            <person name="O'Shea M."/>
        </authorList>
    </citation>
    <scope>PROTEIN SEQUENCE</scope>
    <scope>PROTEOLYTIC PROCESSING</scope>
</reference>
<reference key="2">
    <citation type="journal article" date="1985" name="Biol. Chem. Hoppe-Seyler">
        <title>Primary structures of locust adipokinetic hormones II.</title>
        <authorList>
            <person name="Siegert K."/>
            <person name="Morgan P."/>
            <person name="Mordue W."/>
        </authorList>
    </citation>
    <scope>PROTEIN SEQUENCE OF 1-8</scope>
    <scope>PYROGLUTAMATE FORMATION AT GLN-1</scope>
    <scope>AMIDATION AT TRP-8</scope>
</reference>
<feature type="chain" id="PRO_0000000920" description="Adipokinetic prohormone type 2">
    <location>
        <begin position="1"/>
        <end position="39"/>
    </location>
</feature>
<feature type="peptide" id="PRO_0000000921" description="Adipokinetic hormone 2">
    <location>
        <begin position="1"/>
        <end position="8"/>
    </location>
</feature>
<feature type="peptide" id="PRO_0000000922" description="Adipokinetic hormone precursor-related peptide beta chain">
    <location>
        <begin position="12"/>
        <end position="39"/>
    </location>
</feature>
<feature type="modified residue" description="Pyrrolidone carboxylic acid" evidence="1">
    <location>
        <position position="1"/>
    </location>
</feature>
<feature type="modified residue" description="Tryptophan amide" evidence="1">
    <location>
        <position position="8"/>
    </location>
</feature>
<feature type="disulfide bond" description="Interchain">
    <location>
        <position position="37"/>
    </location>
</feature>
<sequence length="39" mass="4371">QLNFSTGWGRRYADPNADPMAFLTKLIQIEARKLSGCSN</sequence>